<gene>
    <name evidence="1" type="primary">gpmB</name>
    <name type="ordered locus">EcSMS35_4947</name>
</gene>
<dbReference type="EC" id="5.4.2.-" evidence="1"/>
<dbReference type="EMBL" id="CP000970">
    <property type="protein sequence ID" value="ACB17201.1"/>
    <property type="molecule type" value="Genomic_DNA"/>
</dbReference>
<dbReference type="RefSeq" id="WP_000942344.1">
    <property type="nucleotide sequence ID" value="NC_010498.1"/>
</dbReference>
<dbReference type="SMR" id="B1LEK2"/>
<dbReference type="GeneID" id="93777450"/>
<dbReference type="KEGG" id="ecm:EcSMS35_4947"/>
<dbReference type="HOGENOM" id="CLU_033323_9_5_6"/>
<dbReference type="UniPathway" id="UPA00109">
    <property type="reaction ID" value="UER00186"/>
</dbReference>
<dbReference type="Proteomes" id="UP000007011">
    <property type="component" value="Chromosome"/>
</dbReference>
<dbReference type="GO" id="GO:0005737">
    <property type="term" value="C:cytoplasm"/>
    <property type="evidence" value="ECO:0007669"/>
    <property type="project" value="TreeGrafter"/>
</dbReference>
<dbReference type="GO" id="GO:0016791">
    <property type="term" value="F:phosphatase activity"/>
    <property type="evidence" value="ECO:0007669"/>
    <property type="project" value="TreeGrafter"/>
</dbReference>
<dbReference type="GO" id="GO:0004619">
    <property type="term" value="F:phosphoglycerate mutase activity"/>
    <property type="evidence" value="ECO:0007669"/>
    <property type="project" value="UniProtKB-UniRule"/>
</dbReference>
<dbReference type="GO" id="GO:0006096">
    <property type="term" value="P:glycolytic process"/>
    <property type="evidence" value="ECO:0007669"/>
    <property type="project" value="UniProtKB-UniRule"/>
</dbReference>
<dbReference type="CDD" id="cd07067">
    <property type="entry name" value="HP_PGM_like"/>
    <property type="match status" value="1"/>
</dbReference>
<dbReference type="Gene3D" id="3.40.50.1240">
    <property type="entry name" value="Phosphoglycerate mutase-like"/>
    <property type="match status" value="1"/>
</dbReference>
<dbReference type="HAMAP" id="MF_01040">
    <property type="entry name" value="PGAM_GpmB"/>
    <property type="match status" value="1"/>
</dbReference>
<dbReference type="InterPro" id="IPR013078">
    <property type="entry name" value="His_Pase_superF_clade-1"/>
</dbReference>
<dbReference type="InterPro" id="IPR029033">
    <property type="entry name" value="His_PPase_superfam"/>
</dbReference>
<dbReference type="InterPro" id="IPR001345">
    <property type="entry name" value="PG/BPGM_mutase_AS"/>
</dbReference>
<dbReference type="InterPro" id="IPR050275">
    <property type="entry name" value="PGM_Phosphatase"/>
</dbReference>
<dbReference type="InterPro" id="IPR023086">
    <property type="entry name" value="Phosphoglycerate_mutase_GpmB"/>
</dbReference>
<dbReference type="NCBIfam" id="NF002901">
    <property type="entry name" value="PRK03482.1"/>
    <property type="match status" value="1"/>
</dbReference>
<dbReference type="PANTHER" id="PTHR48100">
    <property type="entry name" value="BROAD-SPECIFICITY PHOSPHATASE YOR283W-RELATED"/>
    <property type="match status" value="1"/>
</dbReference>
<dbReference type="PANTHER" id="PTHR48100:SF1">
    <property type="entry name" value="HISTIDINE PHOSPHATASE FAMILY PROTEIN-RELATED"/>
    <property type="match status" value="1"/>
</dbReference>
<dbReference type="Pfam" id="PF00300">
    <property type="entry name" value="His_Phos_1"/>
    <property type="match status" value="1"/>
</dbReference>
<dbReference type="SMART" id="SM00855">
    <property type="entry name" value="PGAM"/>
    <property type="match status" value="1"/>
</dbReference>
<dbReference type="SUPFAM" id="SSF53254">
    <property type="entry name" value="Phosphoglycerate mutase-like"/>
    <property type="match status" value="1"/>
</dbReference>
<dbReference type="PROSITE" id="PS00175">
    <property type="entry name" value="PG_MUTASE"/>
    <property type="match status" value="1"/>
</dbReference>
<name>GPMB_ECOSM</name>
<organism>
    <name type="scientific">Escherichia coli (strain SMS-3-5 / SECEC)</name>
    <dbReference type="NCBI Taxonomy" id="439855"/>
    <lineage>
        <taxon>Bacteria</taxon>
        <taxon>Pseudomonadati</taxon>
        <taxon>Pseudomonadota</taxon>
        <taxon>Gammaproteobacteria</taxon>
        <taxon>Enterobacterales</taxon>
        <taxon>Enterobacteriaceae</taxon>
        <taxon>Escherichia</taxon>
    </lineage>
</organism>
<proteinExistence type="inferred from homology"/>
<sequence>MLQVYLVRHGETQWNAERRIQGQSDSPLTAKGEQQAMQVATRAKELGITHIISSDLGRTRRTAEIIAQACGCDIIFDSRLRELNMGVLEKRHIDSLTEEEENWRRQLVNGTVDGRIPEGESMQELSDRVNAALESCRDLPQGSRPLLVSHGIALGCLVSTILGLPAWAERRLRLRNCSISRVDYQESLWLASGWVVETAGDISHLDAPALDELQR</sequence>
<accession>B1LEK2</accession>
<protein>
    <recommendedName>
        <fullName evidence="1">Probable phosphoglycerate mutase GpmB</fullName>
        <ecNumber evidence="1">5.4.2.-</ecNumber>
    </recommendedName>
    <alternativeName>
        <fullName evidence="1">PGAM</fullName>
    </alternativeName>
    <alternativeName>
        <fullName evidence="1">Phosphoglyceromutase</fullName>
    </alternativeName>
</protein>
<reference key="1">
    <citation type="journal article" date="2008" name="J. Bacteriol.">
        <title>Insights into the environmental resistance gene pool from the genome sequence of the multidrug-resistant environmental isolate Escherichia coli SMS-3-5.</title>
        <authorList>
            <person name="Fricke W.F."/>
            <person name="Wright M.S."/>
            <person name="Lindell A.H."/>
            <person name="Harkins D.M."/>
            <person name="Baker-Austin C."/>
            <person name="Ravel J."/>
            <person name="Stepanauskas R."/>
        </authorList>
    </citation>
    <scope>NUCLEOTIDE SEQUENCE [LARGE SCALE GENOMIC DNA]</scope>
    <source>
        <strain>SMS-3-5 / SECEC</strain>
    </source>
</reference>
<keyword id="KW-0324">Glycolysis</keyword>
<keyword id="KW-0413">Isomerase</keyword>
<feature type="chain" id="PRO_1000136006" description="Probable phosphoglycerate mutase GpmB">
    <location>
        <begin position="1"/>
        <end position="215"/>
    </location>
</feature>
<feature type="active site" description="Tele-phosphohistidine intermediate" evidence="1">
    <location>
        <position position="9"/>
    </location>
</feature>
<feature type="active site" description="Proton donor/acceptor" evidence="1">
    <location>
        <position position="82"/>
    </location>
</feature>
<feature type="binding site" evidence="1">
    <location>
        <begin position="8"/>
        <end position="15"/>
    </location>
    <ligand>
        <name>substrate</name>
    </ligand>
</feature>
<feature type="binding site" evidence="1">
    <location>
        <begin position="21"/>
        <end position="22"/>
    </location>
    <ligand>
        <name>substrate</name>
    </ligand>
</feature>
<feature type="binding site" evidence="1">
    <location>
        <position position="58"/>
    </location>
    <ligand>
        <name>substrate</name>
    </ligand>
</feature>
<feature type="binding site" evidence="1">
    <location>
        <position position="60"/>
    </location>
    <ligand>
        <name>substrate</name>
    </ligand>
</feature>
<feature type="binding site" evidence="1">
    <location>
        <begin position="82"/>
        <end position="85"/>
    </location>
    <ligand>
        <name>substrate</name>
    </ligand>
</feature>
<feature type="binding site" evidence="1">
    <location>
        <begin position="104"/>
        <end position="105"/>
    </location>
    <ligand>
        <name>substrate</name>
    </ligand>
</feature>
<feature type="binding site" evidence="1">
    <location>
        <begin position="151"/>
        <end position="152"/>
    </location>
    <ligand>
        <name>substrate</name>
    </ligand>
</feature>
<feature type="site" description="Transition state stabilizer" evidence="1">
    <location>
        <position position="150"/>
    </location>
</feature>
<comment type="catalytic activity">
    <reaction evidence="1">
        <text>(2R)-2-phosphoglycerate = (2R)-3-phosphoglycerate</text>
        <dbReference type="Rhea" id="RHEA:15901"/>
        <dbReference type="ChEBI" id="CHEBI:58272"/>
        <dbReference type="ChEBI" id="CHEBI:58289"/>
    </reaction>
</comment>
<comment type="pathway">
    <text evidence="1">Carbohydrate degradation; glycolysis; pyruvate from D-glyceraldehyde 3-phosphate: step 3/5.</text>
</comment>
<comment type="similarity">
    <text evidence="1">Belongs to the phosphoglycerate mutase family. GpmB subfamily.</text>
</comment>
<evidence type="ECO:0000255" key="1">
    <source>
        <dbReference type="HAMAP-Rule" id="MF_01040"/>
    </source>
</evidence>